<organism>
    <name type="scientific">Escherichia coli (strain UTI89 / UPEC)</name>
    <dbReference type="NCBI Taxonomy" id="364106"/>
    <lineage>
        <taxon>Bacteria</taxon>
        <taxon>Pseudomonadati</taxon>
        <taxon>Pseudomonadota</taxon>
        <taxon>Gammaproteobacteria</taxon>
        <taxon>Enterobacterales</taxon>
        <taxon>Enterobacteriaceae</taxon>
        <taxon>Escherichia</taxon>
    </lineage>
</organism>
<gene>
    <name evidence="1" type="primary">lpxD</name>
    <name type="ordered locus">UTI89_C0194</name>
</gene>
<dbReference type="EC" id="2.3.1.191" evidence="1"/>
<dbReference type="EMBL" id="CP000243">
    <property type="protein sequence ID" value="ABE05704.1"/>
    <property type="molecule type" value="Genomic_DNA"/>
</dbReference>
<dbReference type="RefSeq" id="WP_001139272.1">
    <property type="nucleotide sequence ID" value="NZ_CP064825.1"/>
</dbReference>
<dbReference type="SMR" id="Q1RG10"/>
<dbReference type="KEGG" id="eci:UTI89_C0194"/>
<dbReference type="HOGENOM" id="CLU_049865_0_1_6"/>
<dbReference type="UniPathway" id="UPA00359">
    <property type="reaction ID" value="UER00479"/>
</dbReference>
<dbReference type="Proteomes" id="UP000001952">
    <property type="component" value="Chromosome"/>
</dbReference>
<dbReference type="GO" id="GO:0016020">
    <property type="term" value="C:membrane"/>
    <property type="evidence" value="ECO:0007669"/>
    <property type="project" value="GOC"/>
</dbReference>
<dbReference type="GO" id="GO:0016410">
    <property type="term" value="F:N-acyltransferase activity"/>
    <property type="evidence" value="ECO:0007669"/>
    <property type="project" value="InterPro"/>
</dbReference>
<dbReference type="GO" id="GO:0103118">
    <property type="term" value="F:UDP-3-O-(R-3-hydroxymyristoyl)-glucosamine N-acyltransferase activity"/>
    <property type="evidence" value="ECO:0007669"/>
    <property type="project" value="UniProtKB-EC"/>
</dbReference>
<dbReference type="GO" id="GO:0009245">
    <property type="term" value="P:lipid A biosynthetic process"/>
    <property type="evidence" value="ECO:0007669"/>
    <property type="project" value="UniProtKB-UniRule"/>
</dbReference>
<dbReference type="CDD" id="cd03352">
    <property type="entry name" value="LbH_LpxD"/>
    <property type="match status" value="1"/>
</dbReference>
<dbReference type="FunFam" id="1.20.5.170:FF:000032">
    <property type="entry name" value="UDP-3-O-(3-hydroxymyristoyl)glucosamine N-acyltransferase"/>
    <property type="match status" value="1"/>
</dbReference>
<dbReference type="FunFam" id="2.160.10.10:FF:000005">
    <property type="entry name" value="UDP-3-O-(3-hydroxymyristoyl)glucosamine N-acyltransferase"/>
    <property type="match status" value="1"/>
</dbReference>
<dbReference type="FunFam" id="3.40.1390.10:FF:000001">
    <property type="entry name" value="UDP-3-O-(3-hydroxymyristoyl)glucosamine N-acyltransferase"/>
    <property type="match status" value="1"/>
</dbReference>
<dbReference type="Gene3D" id="1.20.5.170">
    <property type="match status" value="1"/>
</dbReference>
<dbReference type="Gene3D" id="2.160.10.10">
    <property type="entry name" value="Hexapeptide repeat proteins"/>
    <property type="match status" value="1"/>
</dbReference>
<dbReference type="Gene3D" id="3.40.1390.10">
    <property type="entry name" value="MurE/MurF, N-terminal domain"/>
    <property type="match status" value="1"/>
</dbReference>
<dbReference type="HAMAP" id="MF_00523">
    <property type="entry name" value="LpxD"/>
    <property type="match status" value="1"/>
</dbReference>
<dbReference type="InterPro" id="IPR001451">
    <property type="entry name" value="Hexapep"/>
</dbReference>
<dbReference type="InterPro" id="IPR018357">
    <property type="entry name" value="Hexapep_transf_CS"/>
</dbReference>
<dbReference type="InterPro" id="IPR007691">
    <property type="entry name" value="LpxD"/>
</dbReference>
<dbReference type="InterPro" id="IPR011004">
    <property type="entry name" value="Trimer_LpxA-like_sf"/>
</dbReference>
<dbReference type="InterPro" id="IPR020573">
    <property type="entry name" value="UDP_GlcNAc_AcTrfase_non-rep"/>
</dbReference>
<dbReference type="NCBIfam" id="TIGR01853">
    <property type="entry name" value="lipid_A_lpxD"/>
    <property type="match status" value="1"/>
</dbReference>
<dbReference type="NCBIfam" id="NF002060">
    <property type="entry name" value="PRK00892.1"/>
    <property type="match status" value="1"/>
</dbReference>
<dbReference type="PANTHER" id="PTHR43378">
    <property type="entry name" value="UDP-3-O-ACYLGLUCOSAMINE N-ACYLTRANSFERASE"/>
    <property type="match status" value="1"/>
</dbReference>
<dbReference type="PANTHER" id="PTHR43378:SF2">
    <property type="entry name" value="UDP-3-O-ACYLGLUCOSAMINE N-ACYLTRANSFERASE 1, MITOCHONDRIAL-RELATED"/>
    <property type="match status" value="1"/>
</dbReference>
<dbReference type="Pfam" id="PF00132">
    <property type="entry name" value="Hexapep"/>
    <property type="match status" value="3"/>
</dbReference>
<dbReference type="Pfam" id="PF04613">
    <property type="entry name" value="LpxD"/>
    <property type="match status" value="1"/>
</dbReference>
<dbReference type="SUPFAM" id="SSF51161">
    <property type="entry name" value="Trimeric LpxA-like enzymes"/>
    <property type="match status" value="1"/>
</dbReference>
<dbReference type="PROSITE" id="PS00101">
    <property type="entry name" value="HEXAPEP_TRANSFERASES"/>
    <property type="match status" value="4"/>
</dbReference>
<proteinExistence type="inferred from homology"/>
<protein>
    <recommendedName>
        <fullName evidence="1">UDP-3-O-(3-hydroxymyristoyl)glucosamine N-acyltransferase</fullName>
        <shortName evidence="1">UDP-3-O-(3-OHC14)-GlcN N-acyltransferase</shortName>
        <ecNumber evidence="1">2.3.1.191</ecNumber>
    </recommendedName>
    <alternativeName>
        <fullName evidence="1">UDP-3-O-(3-hydroxytetradecanoyl)glucosamine N-acyltransferase</fullName>
    </alternativeName>
</protein>
<evidence type="ECO:0000255" key="1">
    <source>
        <dbReference type="HAMAP-Rule" id="MF_00523"/>
    </source>
</evidence>
<name>LPXD_ECOUT</name>
<comment type="function">
    <text evidence="1">Catalyzes the N-acylation of UDP-3-O-(hydroxytetradecanoyl)glucosamine using 3-hydroxytetradecanoyl-ACP as the acyl donor. Is involved in the biosynthesis of lipid A, a phosphorylated glycolipid that anchors the lipopolysaccharide to the outer membrane of the cell.</text>
</comment>
<comment type="catalytic activity">
    <reaction evidence="1">
        <text>a UDP-3-O-[(3R)-3-hydroxyacyl]-alpha-D-glucosamine + a (3R)-hydroxyacyl-[ACP] = a UDP-2-N,3-O-bis[(3R)-3-hydroxyacyl]-alpha-D-glucosamine + holo-[ACP] + H(+)</text>
        <dbReference type="Rhea" id="RHEA:53836"/>
        <dbReference type="Rhea" id="RHEA-COMP:9685"/>
        <dbReference type="Rhea" id="RHEA-COMP:9945"/>
        <dbReference type="ChEBI" id="CHEBI:15378"/>
        <dbReference type="ChEBI" id="CHEBI:64479"/>
        <dbReference type="ChEBI" id="CHEBI:78827"/>
        <dbReference type="ChEBI" id="CHEBI:137740"/>
        <dbReference type="ChEBI" id="CHEBI:137748"/>
        <dbReference type="EC" id="2.3.1.191"/>
    </reaction>
</comment>
<comment type="catalytic activity">
    <reaction evidence="1">
        <text>UDP-3-O-[(3R)-3-hydroxytetradecanoyl]-alpha-D-glucosamine + (3R)-hydroxytetradecanoyl-[ACP] = UDP-2-N,3-O-bis[(3R)-3-hydroxytetradecanoyl]-alpha-D-glucosamine + holo-[ACP] + H(+)</text>
        <dbReference type="Rhea" id="RHEA:17817"/>
        <dbReference type="Rhea" id="RHEA-COMP:9646"/>
        <dbReference type="Rhea" id="RHEA-COMP:9685"/>
        <dbReference type="ChEBI" id="CHEBI:15378"/>
        <dbReference type="ChEBI" id="CHEBI:64479"/>
        <dbReference type="ChEBI" id="CHEBI:71573"/>
        <dbReference type="ChEBI" id="CHEBI:78474"/>
        <dbReference type="ChEBI" id="CHEBI:78847"/>
    </reaction>
</comment>
<comment type="pathway">
    <text evidence="1">Glycolipid biosynthesis; lipid IV(A) biosynthesis; lipid IV(A) from (3R)-3-hydroxytetradecanoyl-[acyl-carrier-protein] and UDP-N-acetyl-alpha-D-glucosamine: step 3/6.</text>
</comment>
<comment type="subunit">
    <text evidence="1">Homotrimer.</text>
</comment>
<comment type="similarity">
    <text evidence="1">Belongs to the transferase hexapeptide repeat family. LpxD subfamily.</text>
</comment>
<sequence length="341" mass="36083">MPSIRLADLAQQLDAELHGDGDIVITGVASMQSAQTGHITFMVNPKYREHLGLCQASAVVMTQDDLPFAKSAALVVKNPYLTYARMAQILDTTPKPAQNIAPSAVIDETAKLGNNVSIGANAVIESGVELGDNVIIGAGCFVGKNSKIGAGSRLWANVTIYHEIQIGQNCLIQSGTVVGADGFGYANDRGNWVKIPQIGRVIIGDRVEIGACTTIDRGALDDTVIGNGVIIDNQCQIAHNVVIGDNTAVAGGVIMAGSLKIGRYCMIGGASVINGHMEICDKVTVTGMGMVMRPITEPGVYSSGIPLQPNKVWRKTAALVMNIDDMSKRLKSLERKVNQQD</sequence>
<keyword id="KW-0012">Acyltransferase</keyword>
<keyword id="KW-0441">Lipid A biosynthesis</keyword>
<keyword id="KW-0444">Lipid biosynthesis</keyword>
<keyword id="KW-0443">Lipid metabolism</keyword>
<keyword id="KW-0677">Repeat</keyword>
<keyword id="KW-0808">Transferase</keyword>
<reference key="1">
    <citation type="journal article" date="2006" name="Proc. Natl. Acad. Sci. U.S.A.">
        <title>Identification of genes subject to positive selection in uropathogenic strains of Escherichia coli: a comparative genomics approach.</title>
        <authorList>
            <person name="Chen S.L."/>
            <person name="Hung C.-S."/>
            <person name="Xu J."/>
            <person name="Reigstad C.S."/>
            <person name="Magrini V."/>
            <person name="Sabo A."/>
            <person name="Blasiar D."/>
            <person name="Bieri T."/>
            <person name="Meyer R.R."/>
            <person name="Ozersky P."/>
            <person name="Armstrong J.R."/>
            <person name="Fulton R.S."/>
            <person name="Latreille J.P."/>
            <person name="Spieth J."/>
            <person name="Hooton T.M."/>
            <person name="Mardis E.R."/>
            <person name="Hultgren S.J."/>
            <person name="Gordon J.I."/>
        </authorList>
    </citation>
    <scope>NUCLEOTIDE SEQUENCE [LARGE SCALE GENOMIC DNA]</scope>
    <source>
        <strain>UTI89 / UPEC</strain>
    </source>
</reference>
<accession>Q1RG10</accession>
<feature type="chain" id="PRO_0000264366" description="UDP-3-O-(3-hydroxymyristoyl)glucosamine N-acyltransferase">
    <location>
        <begin position="1"/>
        <end position="341"/>
    </location>
</feature>
<feature type="active site" description="Proton acceptor" evidence="1">
    <location>
        <position position="239"/>
    </location>
</feature>